<evidence type="ECO:0000250" key="1"/>
<evidence type="ECO:0000255" key="2">
    <source>
        <dbReference type="PROSITE-ProRule" id="PRU00028"/>
    </source>
</evidence>
<evidence type="ECO:0000305" key="3"/>
<gene>
    <name type="primary">crygnb</name>
    <name type="synonym">crygn2</name>
    <name type="ORF">zgc:92717</name>
</gene>
<sequence length="183" mass="21745">MSQYSGKICFYEGRCFTGRCLEVYGDCDNFQDRGFMNRVNSIRVESGAWICYDHPDFKGQQYILERGEYPEFQRWNSHNDHMGSCRPIRMHGEQYRMELFEGCNYTGQCMELCDDCPFLQSRGFNTNCVNSVRVFGDGAWVMYEEPNFRGRMYIVERGNYCGHNEWQAQNPHIQSIRRIVNYF</sequence>
<dbReference type="EMBL" id="AY738746">
    <property type="protein sequence ID" value="AAU85778.1"/>
    <property type="molecule type" value="mRNA"/>
</dbReference>
<dbReference type="EMBL" id="BC076197">
    <property type="protein sequence ID" value="AAH76197.1"/>
    <property type="molecule type" value="mRNA"/>
</dbReference>
<dbReference type="RefSeq" id="NP_001003428.1">
    <property type="nucleotide sequence ID" value="NM_001003428.3"/>
</dbReference>
<dbReference type="SMR" id="Q6DGY7"/>
<dbReference type="FunCoup" id="Q6DGY7">
    <property type="interactions" value="1834"/>
</dbReference>
<dbReference type="STRING" id="7955.ENSDARP00000041348"/>
<dbReference type="PaxDb" id="7955-ENSDARP00000041348"/>
<dbReference type="GeneID" id="445034"/>
<dbReference type="KEGG" id="dre:445034"/>
<dbReference type="AGR" id="ZFIN:ZDB-GENE-040801-16"/>
<dbReference type="CTD" id="445034"/>
<dbReference type="ZFIN" id="ZDB-GENE-040801-16">
    <property type="gene designation" value="crygn2"/>
</dbReference>
<dbReference type="eggNOG" id="ENOG502QV8X">
    <property type="taxonomic scope" value="Eukaryota"/>
</dbReference>
<dbReference type="InParanoid" id="Q6DGY7"/>
<dbReference type="OrthoDB" id="5976022at2759"/>
<dbReference type="PhylomeDB" id="Q6DGY7"/>
<dbReference type="TreeFam" id="TF331401"/>
<dbReference type="PRO" id="PR:Q6DGY7"/>
<dbReference type="Proteomes" id="UP000000437">
    <property type="component" value="Chromosome 24"/>
</dbReference>
<dbReference type="GO" id="GO:0005212">
    <property type="term" value="F:structural constituent of eye lens"/>
    <property type="evidence" value="ECO:0000318"/>
    <property type="project" value="GO_Central"/>
</dbReference>
<dbReference type="GO" id="GO:0002088">
    <property type="term" value="P:lens development in camera-type eye"/>
    <property type="evidence" value="ECO:0000318"/>
    <property type="project" value="GO_Central"/>
</dbReference>
<dbReference type="GO" id="GO:0007601">
    <property type="term" value="P:visual perception"/>
    <property type="evidence" value="ECO:0000318"/>
    <property type="project" value="GO_Central"/>
</dbReference>
<dbReference type="FunFam" id="2.60.20.10:FF:000007">
    <property type="entry name" value="Crystallin gamma N"/>
    <property type="match status" value="1"/>
</dbReference>
<dbReference type="FunFam" id="2.60.20.10:FF:000003">
    <property type="entry name" value="Crystallin gamma S"/>
    <property type="match status" value="1"/>
</dbReference>
<dbReference type="Gene3D" id="2.60.20.10">
    <property type="entry name" value="Crystallins"/>
    <property type="match status" value="2"/>
</dbReference>
<dbReference type="InterPro" id="IPR050252">
    <property type="entry name" value="Beta/Gamma-Crystallin"/>
</dbReference>
<dbReference type="InterPro" id="IPR001064">
    <property type="entry name" value="Beta/gamma_crystallin"/>
</dbReference>
<dbReference type="InterPro" id="IPR011024">
    <property type="entry name" value="G_crystallin-like"/>
</dbReference>
<dbReference type="PANTHER" id="PTHR11818">
    <property type="entry name" value="BETA/GAMMA CRYSTALLIN"/>
    <property type="match status" value="1"/>
</dbReference>
<dbReference type="PANTHER" id="PTHR11818:SF22">
    <property type="entry name" value="GAMMA-CRYSTALLIN N"/>
    <property type="match status" value="1"/>
</dbReference>
<dbReference type="Pfam" id="PF00030">
    <property type="entry name" value="Crystall"/>
    <property type="match status" value="2"/>
</dbReference>
<dbReference type="PRINTS" id="PR01367">
    <property type="entry name" value="BGCRYSTALLIN"/>
</dbReference>
<dbReference type="SMART" id="SM00247">
    <property type="entry name" value="XTALbg"/>
    <property type="match status" value="2"/>
</dbReference>
<dbReference type="SUPFAM" id="SSF49695">
    <property type="entry name" value="gamma-Crystallin-like"/>
    <property type="match status" value="1"/>
</dbReference>
<dbReference type="PROSITE" id="PS50915">
    <property type="entry name" value="CRYSTALLIN_BETA_GAMMA"/>
    <property type="match status" value="4"/>
</dbReference>
<keyword id="KW-0273">Eye lens protein</keyword>
<keyword id="KW-1185">Reference proteome</keyword>
<keyword id="KW-0677">Repeat</keyword>
<feature type="chain" id="PRO_0000311284" description="Gamma-crystallin N-B">
    <location>
        <begin position="1"/>
        <end position="183"/>
    </location>
</feature>
<feature type="domain" description="Beta/gamma crystallin 'Greek key' 1" evidence="2">
    <location>
        <begin position="6"/>
        <end position="46"/>
    </location>
</feature>
<feature type="domain" description="Beta/gamma crystallin 'Greek key' 2" evidence="2">
    <location>
        <begin position="47"/>
        <end position="89"/>
    </location>
</feature>
<feature type="domain" description="Beta/gamma crystallin 'Greek key' 3" evidence="2">
    <location>
        <begin position="95"/>
        <end position="136"/>
    </location>
</feature>
<feature type="domain" description="Beta/gamma crystallin 'Greek key' 4" evidence="2">
    <location>
        <begin position="138"/>
        <end position="180"/>
    </location>
</feature>
<name>CRGNB_DANRE</name>
<reference key="1">
    <citation type="journal article" date="2005" name="FEBS J.">
        <title>Gamma-N-crystallin and the evolution of the betagamma-crystallin superfamily in vertebrates.</title>
        <authorList>
            <person name="Wistow G."/>
            <person name="Wyatt K."/>
            <person name="David L."/>
            <person name="Gao C."/>
            <person name="Bateman O."/>
            <person name="Bernstein S."/>
            <person name="Tomarev S."/>
            <person name="Segovia L."/>
            <person name="Slingsby C."/>
            <person name="Vihtelic T."/>
        </authorList>
    </citation>
    <scope>NUCLEOTIDE SEQUENCE [MRNA]</scope>
</reference>
<reference key="2">
    <citation type="submission" date="2004-07" db="EMBL/GenBank/DDBJ databases">
        <authorList>
            <consortium name="NIH - Zebrafish Gene Collection (ZGC) project"/>
        </authorList>
    </citation>
    <scope>NUCLEOTIDE SEQUENCE [LARGE SCALE MRNA]</scope>
    <source>
        <tissue>Eye</tissue>
    </source>
</reference>
<accession>Q6DGY7</accession>
<protein>
    <recommendedName>
        <fullName>Gamma-crystallin N-B</fullName>
    </recommendedName>
    <alternativeName>
        <fullName>Gamma-N-crystallin-B</fullName>
    </alternativeName>
    <alternativeName>
        <fullName>Gamma-N2-crystallin</fullName>
    </alternativeName>
</protein>
<proteinExistence type="evidence at transcript level"/>
<comment type="function">
    <text evidence="1">Crystallins are the dominant structural components of the vertebrate eye lens.</text>
</comment>
<comment type="subunit">
    <text evidence="1">Monomer.</text>
</comment>
<comment type="domain">
    <text evidence="1">Has a two-domain beta-structure, folded into four very similar Greek key motifs.</text>
</comment>
<comment type="similarity">
    <text evidence="3">Belongs to the beta/gamma-crystallin family.</text>
</comment>
<organism>
    <name type="scientific">Danio rerio</name>
    <name type="common">Zebrafish</name>
    <name type="synonym">Brachydanio rerio</name>
    <dbReference type="NCBI Taxonomy" id="7955"/>
    <lineage>
        <taxon>Eukaryota</taxon>
        <taxon>Metazoa</taxon>
        <taxon>Chordata</taxon>
        <taxon>Craniata</taxon>
        <taxon>Vertebrata</taxon>
        <taxon>Euteleostomi</taxon>
        <taxon>Actinopterygii</taxon>
        <taxon>Neopterygii</taxon>
        <taxon>Teleostei</taxon>
        <taxon>Ostariophysi</taxon>
        <taxon>Cypriniformes</taxon>
        <taxon>Danionidae</taxon>
        <taxon>Danioninae</taxon>
        <taxon>Danio</taxon>
    </lineage>
</organism>